<sequence>MIDREQVRKVALLARLELTPQEEEQFTTQLGSILDYVEQLNELDVSNVPPTARAIDVSNITREDNLQPYADREAILSSAPEQEGEFFKVPKILNAE</sequence>
<feature type="chain" id="PRO_1000016062" description="Aspartyl/glutamyl-tRNA(Asn/Gln) amidotransferase subunit C">
    <location>
        <begin position="1"/>
        <end position="96"/>
    </location>
</feature>
<gene>
    <name evidence="1" type="primary">gatC</name>
    <name type="ordered locus">Ava_3890</name>
</gene>
<reference key="1">
    <citation type="journal article" date="2014" name="Stand. Genomic Sci.">
        <title>Complete genome sequence of Anabaena variabilis ATCC 29413.</title>
        <authorList>
            <person name="Thiel T."/>
            <person name="Pratte B.S."/>
            <person name="Zhong J."/>
            <person name="Goodwin L."/>
            <person name="Copeland A."/>
            <person name="Lucas S."/>
            <person name="Han C."/>
            <person name="Pitluck S."/>
            <person name="Land M.L."/>
            <person name="Kyrpides N.C."/>
            <person name="Woyke T."/>
        </authorList>
    </citation>
    <scope>NUCLEOTIDE SEQUENCE [LARGE SCALE GENOMIC DNA]</scope>
    <source>
        <strain>ATCC 29413 / PCC 7937</strain>
    </source>
</reference>
<organism>
    <name type="scientific">Trichormus variabilis (strain ATCC 29413 / PCC 7937)</name>
    <name type="common">Anabaena variabilis</name>
    <dbReference type="NCBI Taxonomy" id="240292"/>
    <lineage>
        <taxon>Bacteria</taxon>
        <taxon>Bacillati</taxon>
        <taxon>Cyanobacteriota</taxon>
        <taxon>Cyanophyceae</taxon>
        <taxon>Nostocales</taxon>
        <taxon>Nostocaceae</taxon>
        <taxon>Trichormus</taxon>
    </lineage>
</organism>
<protein>
    <recommendedName>
        <fullName evidence="1">Aspartyl/glutamyl-tRNA(Asn/Gln) amidotransferase subunit C</fullName>
        <shortName evidence="1">Asp/Glu-ADT subunit C</shortName>
        <ecNumber evidence="1">6.3.5.-</ecNumber>
    </recommendedName>
</protein>
<keyword id="KW-0067">ATP-binding</keyword>
<keyword id="KW-0436">Ligase</keyword>
<keyword id="KW-0547">Nucleotide-binding</keyword>
<keyword id="KW-0648">Protein biosynthesis</keyword>
<name>GATC_TRIV2</name>
<dbReference type="EC" id="6.3.5.-" evidence="1"/>
<dbReference type="EMBL" id="CP000117">
    <property type="protein sequence ID" value="ABA23495.1"/>
    <property type="molecule type" value="Genomic_DNA"/>
</dbReference>
<dbReference type="SMR" id="Q3M691"/>
<dbReference type="STRING" id="240292.Ava_3890"/>
<dbReference type="KEGG" id="ava:Ava_3890"/>
<dbReference type="eggNOG" id="COG0721">
    <property type="taxonomic scope" value="Bacteria"/>
</dbReference>
<dbReference type="HOGENOM" id="CLU_105899_2_0_3"/>
<dbReference type="Proteomes" id="UP000002533">
    <property type="component" value="Chromosome"/>
</dbReference>
<dbReference type="GO" id="GO:0050566">
    <property type="term" value="F:asparaginyl-tRNA synthase (glutamine-hydrolyzing) activity"/>
    <property type="evidence" value="ECO:0007669"/>
    <property type="project" value="RHEA"/>
</dbReference>
<dbReference type="GO" id="GO:0005524">
    <property type="term" value="F:ATP binding"/>
    <property type="evidence" value="ECO:0007669"/>
    <property type="project" value="UniProtKB-KW"/>
</dbReference>
<dbReference type="GO" id="GO:0050567">
    <property type="term" value="F:glutaminyl-tRNA synthase (glutamine-hydrolyzing) activity"/>
    <property type="evidence" value="ECO:0007669"/>
    <property type="project" value="UniProtKB-UniRule"/>
</dbReference>
<dbReference type="GO" id="GO:0070681">
    <property type="term" value="P:glutaminyl-tRNAGln biosynthesis via transamidation"/>
    <property type="evidence" value="ECO:0007669"/>
    <property type="project" value="TreeGrafter"/>
</dbReference>
<dbReference type="GO" id="GO:0006450">
    <property type="term" value="P:regulation of translational fidelity"/>
    <property type="evidence" value="ECO:0007669"/>
    <property type="project" value="InterPro"/>
</dbReference>
<dbReference type="GO" id="GO:0006412">
    <property type="term" value="P:translation"/>
    <property type="evidence" value="ECO:0007669"/>
    <property type="project" value="UniProtKB-UniRule"/>
</dbReference>
<dbReference type="Gene3D" id="1.10.20.60">
    <property type="entry name" value="Glu-tRNAGln amidotransferase C subunit, N-terminal domain"/>
    <property type="match status" value="1"/>
</dbReference>
<dbReference type="HAMAP" id="MF_00122">
    <property type="entry name" value="GatC"/>
    <property type="match status" value="1"/>
</dbReference>
<dbReference type="InterPro" id="IPR036113">
    <property type="entry name" value="Asp/Glu-ADT_sf_sub_c"/>
</dbReference>
<dbReference type="InterPro" id="IPR003837">
    <property type="entry name" value="GatC"/>
</dbReference>
<dbReference type="NCBIfam" id="TIGR00135">
    <property type="entry name" value="gatC"/>
    <property type="match status" value="1"/>
</dbReference>
<dbReference type="PANTHER" id="PTHR15004">
    <property type="entry name" value="GLUTAMYL-TRNA(GLN) AMIDOTRANSFERASE SUBUNIT C, MITOCHONDRIAL"/>
    <property type="match status" value="1"/>
</dbReference>
<dbReference type="PANTHER" id="PTHR15004:SF0">
    <property type="entry name" value="GLUTAMYL-TRNA(GLN) AMIDOTRANSFERASE SUBUNIT C, MITOCHONDRIAL"/>
    <property type="match status" value="1"/>
</dbReference>
<dbReference type="Pfam" id="PF02686">
    <property type="entry name" value="GatC"/>
    <property type="match status" value="1"/>
</dbReference>
<dbReference type="SUPFAM" id="SSF141000">
    <property type="entry name" value="Glu-tRNAGln amidotransferase C subunit"/>
    <property type="match status" value="1"/>
</dbReference>
<proteinExistence type="inferred from homology"/>
<evidence type="ECO:0000255" key="1">
    <source>
        <dbReference type="HAMAP-Rule" id="MF_00122"/>
    </source>
</evidence>
<accession>Q3M691</accession>
<comment type="function">
    <text evidence="1">Allows the formation of correctly charged Asn-tRNA(Asn) or Gln-tRNA(Gln) through the transamidation of misacylated Asp-tRNA(Asn) or Glu-tRNA(Gln) in organisms which lack either or both of asparaginyl-tRNA or glutaminyl-tRNA synthetases. The reaction takes place in the presence of glutamine and ATP through an activated phospho-Asp-tRNA(Asn) or phospho-Glu-tRNA(Gln).</text>
</comment>
<comment type="catalytic activity">
    <reaction evidence="1">
        <text>L-glutamyl-tRNA(Gln) + L-glutamine + ATP + H2O = L-glutaminyl-tRNA(Gln) + L-glutamate + ADP + phosphate + H(+)</text>
        <dbReference type="Rhea" id="RHEA:17521"/>
        <dbReference type="Rhea" id="RHEA-COMP:9681"/>
        <dbReference type="Rhea" id="RHEA-COMP:9684"/>
        <dbReference type="ChEBI" id="CHEBI:15377"/>
        <dbReference type="ChEBI" id="CHEBI:15378"/>
        <dbReference type="ChEBI" id="CHEBI:29985"/>
        <dbReference type="ChEBI" id="CHEBI:30616"/>
        <dbReference type="ChEBI" id="CHEBI:43474"/>
        <dbReference type="ChEBI" id="CHEBI:58359"/>
        <dbReference type="ChEBI" id="CHEBI:78520"/>
        <dbReference type="ChEBI" id="CHEBI:78521"/>
        <dbReference type="ChEBI" id="CHEBI:456216"/>
    </reaction>
</comment>
<comment type="catalytic activity">
    <reaction evidence="1">
        <text>L-aspartyl-tRNA(Asn) + L-glutamine + ATP + H2O = L-asparaginyl-tRNA(Asn) + L-glutamate + ADP + phosphate + 2 H(+)</text>
        <dbReference type="Rhea" id="RHEA:14513"/>
        <dbReference type="Rhea" id="RHEA-COMP:9674"/>
        <dbReference type="Rhea" id="RHEA-COMP:9677"/>
        <dbReference type="ChEBI" id="CHEBI:15377"/>
        <dbReference type="ChEBI" id="CHEBI:15378"/>
        <dbReference type="ChEBI" id="CHEBI:29985"/>
        <dbReference type="ChEBI" id="CHEBI:30616"/>
        <dbReference type="ChEBI" id="CHEBI:43474"/>
        <dbReference type="ChEBI" id="CHEBI:58359"/>
        <dbReference type="ChEBI" id="CHEBI:78515"/>
        <dbReference type="ChEBI" id="CHEBI:78516"/>
        <dbReference type="ChEBI" id="CHEBI:456216"/>
    </reaction>
</comment>
<comment type="subunit">
    <text evidence="1">Heterotrimer of A, B and C subunits.</text>
</comment>
<comment type="similarity">
    <text evidence="1">Belongs to the GatC family.</text>
</comment>